<proteinExistence type="inferred from homology"/>
<reference key="1">
    <citation type="submission" date="2005-10" db="EMBL/GenBank/DDBJ databases">
        <title>Complete sequence of chromosome 1 of Burkholderia sp. 383.</title>
        <authorList>
            <consortium name="US DOE Joint Genome Institute"/>
            <person name="Copeland A."/>
            <person name="Lucas S."/>
            <person name="Lapidus A."/>
            <person name="Barry K."/>
            <person name="Detter J.C."/>
            <person name="Glavina T."/>
            <person name="Hammon N."/>
            <person name="Israni S."/>
            <person name="Pitluck S."/>
            <person name="Chain P."/>
            <person name="Malfatti S."/>
            <person name="Shin M."/>
            <person name="Vergez L."/>
            <person name="Schmutz J."/>
            <person name="Larimer F."/>
            <person name="Land M."/>
            <person name="Kyrpides N."/>
            <person name="Lykidis A."/>
            <person name="Richardson P."/>
        </authorList>
    </citation>
    <scope>NUCLEOTIDE SEQUENCE [LARGE SCALE GENOMIC DNA]</scope>
    <source>
        <strain>ATCC 17760 / DSM 23089 / LMG 22485 / NCIMB 9086 / R18194 / 383</strain>
    </source>
</reference>
<comment type="function">
    <text evidence="1">Channel that opens in response to stretch forces in the membrane lipid bilayer. May participate in the regulation of osmotic pressure changes within the cell.</text>
</comment>
<comment type="subunit">
    <text evidence="1">Homopentamer.</text>
</comment>
<comment type="subcellular location">
    <subcellularLocation>
        <location evidence="1">Cell inner membrane</location>
        <topology evidence="1">Multi-pass membrane protein</topology>
    </subcellularLocation>
</comment>
<comment type="similarity">
    <text evidence="1">Belongs to the MscL family.</text>
</comment>
<gene>
    <name evidence="1" type="primary">mscL</name>
    <name type="ordered locus">Bcep18194_A5262</name>
</gene>
<dbReference type="EMBL" id="CP000151">
    <property type="protein sequence ID" value="ABB08856.1"/>
    <property type="molecule type" value="Genomic_DNA"/>
</dbReference>
<dbReference type="RefSeq" id="WP_006487991.1">
    <property type="nucleotide sequence ID" value="NZ_WNDV01000025.1"/>
</dbReference>
<dbReference type="GeneID" id="93142378"/>
<dbReference type="KEGG" id="bur:Bcep18194_A5262"/>
<dbReference type="HOGENOM" id="CLU_095787_0_1_4"/>
<dbReference type="Proteomes" id="UP000002705">
    <property type="component" value="Chromosome 1"/>
</dbReference>
<dbReference type="GO" id="GO:0005886">
    <property type="term" value="C:plasma membrane"/>
    <property type="evidence" value="ECO:0007669"/>
    <property type="project" value="UniProtKB-SubCell"/>
</dbReference>
<dbReference type="GO" id="GO:0008381">
    <property type="term" value="F:mechanosensitive monoatomic ion channel activity"/>
    <property type="evidence" value="ECO:0007669"/>
    <property type="project" value="UniProtKB-UniRule"/>
</dbReference>
<dbReference type="Gene3D" id="1.10.1200.120">
    <property type="entry name" value="Large-conductance mechanosensitive channel, MscL, domain 1"/>
    <property type="match status" value="1"/>
</dbReference>
<dbReference type="HAMAP" id="MF_00115">
    <property type="entry name" value="MscL"/>
    <property type="match status" value="1"/>
</dbReference>
<dbReference type="InterPro" id="IPR019823">
    <property type="entry name" value="Mechanosensitive_channel_CS"/>
</dbReference>
<dbReference type="InterPro" id="IPR001185">
    <property type="entry name" value="MS_channel"/>
</dbReference>
<dbReference type="InterPro" id="IPR037673">
    <property type="entry name" value="MSC/AndL"/>
</dbReference>
<dbReference type="InterPro" id="IPR036019">
    <property type="entry name" value="MscL_channel"/>
</dbReference>
<dbReference type="NCBIfam" id="TIGR00220">
    <property type="entry name" value="mscL"/>
    <property type="match status" value="1"/>
</dbReference>
<dbReference type="NCBIfam" id="NF001843">
    <property type="entry name" value="PRK00567.1-4"/>
    <property type="match status" value="1"/>
</dbReference>
<dbReference type="NCBIfam" id="NF010557">
    <property type="entry name" value="PRK13952.1"/>
    <property type="match status" value="1"/>
</dbReference>
<dbReference type="PANTHER" id="PTHR30266:SF2">
    <property type="entry name" value="LARGE-CONDUCTANCE MECHANOSENSITIVE CHANNEL"/>
    <property type="match status" value="1"/>
</dbReference>
<dbReference type="PANTHER" id="PTHR30266">
    <property type="entry name" value="MECHANOSENSITIVE CHANNEL MSCL"/>
    <property type="match status" value="1"/>
</dbReference>
<dbReference type="Pfam" id="PF01741">
    <property type="entry name" value="MscL"/>
    <property type="match status" value="1"/>
</dbReference>
<dbReference type="PRINTS" id="PR01264">
    <property type="entry name" value="MECHCHANNEL"/>
</dbReference>
<dbReference type="SUPFAM" id="SSF81330">
    <property type="entry name" value="Gated mechanosensitive channel"/>
    <property type="match status" value="1"/>
</dbReference>
<dbReference type="PROSITE" id="PS01327">
    <property type="entry name" value="MSCL"/>
    <property type="match status" value="1"/>
</dbReference>
<sequence length="143" mass="15464">MSIIKEFKEFAVKGNVMDLAVGVIIGGAFSKIVDSVVKDLIMPVIGVLTGGLDFSNKFVLLGTIPPTFKGNPDSFKDLQAAGVAAFGYGSFITVAINFVILAFIIFLMVKFINKLRKPEEAAPAATPEDTVLLREIRDSLKQR</sequence>
<accession>Q39FB0</accession>
<organism>
    <name type="scientific">Burkholderia lata (strain ATCC 17760 / DSM 23089 / LMG 22485 / NCIMB 9086 / R18194 / 383)</name>
    <dbReference type="NCBI Taxonomy" id="482957"/>
    <lineage>
        <taxon>Bacteria</taxon>
        <taxon>Pseudomonadati</taxon>
        <taxon>Pseudomonadota</taxon>
        <taxon>Betaproteobacteria</taxon>
        <taxon>Burkholderiales</taxon>
        <taxon>Burkholderiaceae</taxon>
        <taxon>Burkholderia</taxon>
        <taxon>Burkholderia cepacia complex</taxon>
    </lineage>
</organism>
<name>MSCL_BURL3</name>
<feature type="chain" id="PRO_0000237989" description="Large-conductance mechanosensitive channel">
    <location>
        <begin position="1"/>
        <end position="143"/>
    </location>
</feature>
<feature type="transmembrane region" description="Helical" evidence="1">
    <location>
        <begin position="10"/>
        <end position="30"/>
    </location>
</feature>
<feature type="transmembrane region" description="Helical" evidence="1">
    <location>
        <begin position="89"/>
        <end position="109"/>
    </location>
</feature>
<keyword id="KW-0997">Cell inner membrane</keyword>
<keyword id="KW-1003">Cell membrane</keyword>
<keyword id="KW-0407">Ion channel</keyword>
<keyword id="KW-0406">Ion transport</keyword>
<keyword id="KW-0472">Membrane</keyword>
<keyword id="KW-0812">Transmembrane</keyword>
<keyword id="KW-1133">Transmembrane helix</keyword>
<keyword id="KW-0813">Transport</keyword>
<protein>
    <recommendedName>
        <fullName evidence="1">Large-conductance mechanosensitive channel</fullName>
    </recommendedName>
</protein>
<evidence type="ECO:0000255" key="1">
    <source>
        <dbReference type="HAMAP-Rule" id="MF_00115"/>
    </source>
</evidence>